<proteinExistence type="inferred from homology"/>
<organism>
    <name type="scientific">Synechococcus sp. (strain CC9311)</name>
    <dbReference type="NCBI Taxonomy" id="64471"/>
    <lineage>
        <taxon>Bacteria</taxon>
        <taxon>Bacillati</taxon>
        <taxon>Cyanobacteriota</taxon>
        <taxon>Cyanophyceae</taxon>
        <taxon>Synechococcales</taxon>
        <taxon>Synechococcaceae</taxon>
        <taxon>Synechococcus</taxon>
    </lineage>
</organism>
<dbReference type="EC" id="6.3.5.7" evidence="1"/>
<dbReference type="EMBL" id="CP000435">
    <property type="protein sequence ID" value="ABI47235.1"/>
    <property type="molecule type" value="Genomic_DNA"/>
</dbReference>
<dbReference type="RefSeq" id="WP_011619551.1">
    <property type="nucleotide sequence ID" value="NC_008319.1"/>
</dbReference>
<dbReference type="SMR" id="Q0I9N6"/>
<dbReference type="STRING" id="64471.sync_1631"/>
<dbReference type="KEGG" id="syg:sync_1631"/>
<dbReference type="eggNOG" id="COG0154">
    <property type="taxonomic scope" value="Bacteria"/>
</dbReference>
<dbReference type="HOGENOM" id="CLU_009600_0_3_3"/>
<dbReference type="OrthoDB" id="9811471at2"/>
<dbReference type="Proteomes" id="UP000001961">
    <property type="component" value="Chromosome"/>
</dbReference>
<dbReference type="GO" id="GO:0030956">
    <property type="term" value="C:glutamyl-tRNA(Gln) amidotransferase complex"/>
    <property type="evidence" value="ECO:0007669"/>
    <property type="project" value="InterPro"/>
</dbReference>
<dbReference type="GO" id="GO:0005524">
    <property type="term" value="F:ATP binding"/>
    <property type="evidence" value="ECO:0007669"/>
    <property type="project" value="UniProtKB-KW"/>
</dbReference>
<dbReference type="GO" id="GO:0050567">
    <property type="term" value="F:glutaminyl-tRNA synthase (glutamine-hydrolyzing) activity"/>
    <property type="evidence" value="ECO:0007669"/>
    <property type="project" value="UniProtKB-UniRule"/>
</dbReference>
<dbReference type="GO" id="GO:0006412">
    <property type="term" value="P:translation"/>
    <property type="evidence" value="ECO:0007669"/>
    <property type="project" value="UniProtKB-UniRule"/>
</dbReference>
<dbReference type="Gene3D" id="3.90.1300.10">
    <property type="entry name" value="Amidase signature (AS) domain"/>
    <property type="match status" value="1"/>
</dbReference>
<dbReference type="HAMAP" id="MF_00120">
    <property type="entry name" value="GatA"/>
    <property type="match status" value="1"/>
</dbReference>
<dbReference type="InterPro" id="IPR000120">
    <property type="entry name" value="Amidase"/>
</dbReference>
<dbReference type="InterPro" id="IPR020556">
    <property type="entry name" value="Amidase_CS"/>
</dbReference>
<dbReference type="InterPro" id="IPR023631">
    <property type="entry name" value="Amidase_dom"/>
</dbReference>
<dbReference type="InterPro" id="IPR036928">
    <property type="entry name" value="AS_sf"/>
</dbReference>
<dbReference type="InterPro" id="IPR004412">
    <property type="entry name" value="GatA"/>
</dbReference>
<dbReference type="NCBIfam" id="TIGR00132">
    <property type="entry name" value="gatA"/>
    <property type="match status" value="1"/>
</dbReference>
<dbReference type="PANTHER" id="PTHR11895:SF151">
    <property type="entry name" value="GLUTAMYL-TRNA(GLN) AMIDOTRANSFERASE SUBUNIT A"/>
    <property type="match status" value="1"/>
</dbReference>
<dbReference type="PANTHER" id="PTHR11895">
    <property type="entry name" value="TRANSAMIDASE"/>
    <property type="match status" value="1"/>
</dbReference>
<dbReference type="Pfam" id="PF01425">
    <property type="entry name" value="Amidase"/>
    <property type="match status" value="1"/>
</dbReference>
<dbReference type="PIRSF" id="PIRSF001221">
    <property type="entry name" value="Amidase_fungi"/>
    <property type="match status" value="1"/>
</dbReference>
<dbReference type="SUPFAM" id="SSF75304">
    <property type="entry name" value="Amidase signature (AS) enzymes"/>
    <property type="match status" value="1"/>
</dbReference>
<dbReference type="PROSITE" id="PS00571">
    <property type="entry name" value="AMIDASES"/>
    <property type="match status" value="1"/>
</dbReference>
<sequence length="487" mass="51406">MAIAEWRQQLESGEVSARELTDHHLARIKAVDSSVHAFLEVTADRARADADRLDEARAAGEDLPPLAGVPIAIKDNLCTKGIRTTSSSRMLESFVPPYESTVTDRLWRSGAVLIGKTNLDEFAMGGSTETSAFGPTANPWNTGYVPGGSSGGSAAAVAAGECMASLGSDTGGSIRQPASFCGVVGLKPTYGRVSRYGLVAFASSLDQVGPFATSVSDAAELLQAIAGEDPRDSTCLKAPVPNYREVLGRSVSGLRIGVVRECFDQEGIDPQVKASVLAAAELLQSLGAELVDVSCPRFNDGIATYYVIAPSEASANLARYDGVKYGFRAEDASSLASMTARSRTEGFGSEVQRRILIGTYALSAGYVDAYYRKAQQVRTLIRRDFETAFASVDVLLTPTAPSTAFAAGAHADDPLAMYLADLLTIPANLAGLPAINVPCGFDSEGLPIGVQLIGNVLEEPLLLQVAHQYEQSADVMSRRPEGAFIPV</sequence>
<protein>
    <recommendedName>
        <fullName evidence="1">Glutamyl-tRNA(Gln) amidotransferase subunit A</fullName>
        <shortName evidence="1">Glu-ADT subunit A</shortName>
        <ecNumber evidence="1">6.3.5.7</ecNumber>
    </recommendedName>
</protein>
<reference key="1">
    <citation type="journal article" date="2006" name="Proc. Natl. Acad. Sci. U.S.A.">
        <title>Genome sequence of Synechococcus CC9311: insights into adaptation to a coastal environment.</title>
        <authorList>
            <person name="Palenik B."/>
            <person name="Ren Q."/>
            <person name="Dupont C.L."/>
            <person name="Myers G.S."/>
            <person name="Heidelberg J.F."/>
            <person name="Badger J.H."/>
            <person name="Madupu R."/>
            <person name="Nelson W.C."/>
            <person name="Brinkac L.M."/>
            <person name="Dodson R.J."/>
            <person name="Durkin A.S."/>
            <person name="Daugherty S.C."/>
            <person name="Sullivan S.A."/>
            <person name="Khouri H."/>
            <person name="Mohamoud Y."/>
            <person name="Halpin R."/>
            <person name="Paulsen I.T."/>
        </authorList>
    </citation>
    <scope>NUCLEOTIDE SEQUENCE [LARGE SCALE GENOMIC DNA]</scope>
    <source>
        <strain>CC9311</strain>
    </source>
</reference>
<gene>
    <name evidence="1" type="primary">gatA</name>
    <name type="ordered locus">sync_1631</name>
</gene>
<feature type="chain" id="PRO_1000015923" description="Glutamyl-tRNA(Gln) amidotransferase subunit A">
    <location>
        <begin position="1"/>
        <end position="487"/>
    </location>
</feature>
<feature type="active site" description="Charge relay system" evidence="1">
    <location>
        <position position="74"/>
    </location>
</feature>
<feature type="active site" description="Charge relay system" evidence="1">
    <location>
        <position position="149"/>
    </location>
</feature>
<feature type="active site" description="Acyl-ester intermediate" evidence="1">
    <location>
        <position position="173"/>
    </location>
</feature>
<accession>Q0I9N6</accession>
<keyword id="KW-0067">ATP-binding</keyword>
<keyword id="KW-0436">Ligase</keyword>
<keyword id="KW-0547">Nucleotide-binding</keyword>
<keyword id="KW-0648">Protein biosynthesis</keyword>
<keyword id="KW-1185">Reference proteome</keyword>
<evidence type="ECO:0000255" key="1">
    <source>
        <dbReference type="HAMAP-Rule" id="MF_00120"/>
    </source>
</evidence>
<name>GATA_SYNS3</name>
<comment type="function">
    <text evidence="1">Allows the formation of correctly charged Gln-tRNA(Gln) through the transamidation of misacylated Glu-tRNA(Gln) in organisms which lack glutaminyl-tRNA synthetase. The reaction takes place in the presence of glutamine and ATP through an activated gamma-phospho-Glu-tRNA(Gln).</text>
</comment>
<comment type="catalytic activity">
    <reaction evidence="1">
        <text>L-glutamyl-tRNA(Gln) + L-glutamine + ATP + H2O = L-glutaminyl-tRNA(Gln) + L-glutamate + ADP + phosphate + H(+)</text>
        <dbReference type="Rhea" id="RHEA:17521"/>
        <dbReference type="Rhea" id="RHEA-COMP:9681"/>
        <dbReference type="Rhea" id="RHEA-COMP:9684"/>
        <dbReference type="ChEBI" id="CHEBI:15377"/>
        <dbReference type="ChEBI" id="CHEBI:15378"/>
        <dbReference type="ChEBI" id="CHEBI:29985"/>
        <dbReference type="ChEBI" id="CHEBI:30616"/>
        <dbReference type="ChEBI" id="CHEBI:43474"/>
        <dbReference type="ChEBI" id="CHEBI:58359"/>
        <dbReference type="ChEBI" id="CHEBI:78520"/>
        <dbReference type="ChEBI" id="CHEBI:78521"/>
        <dbReference type="ChEBI" id="CHEBI:456216"/>
        <dbReference type="EC" id="6.3.5.7"/>
    </reaction>
</comment>
<comment type="subunit">
    <text evidence="1">Heterotrimer of A, B and C subunits.</text>
</comment>
<comment type="similarity">
    <text evidence="1">Belongs to the amidase family. GatA subfamily.</text>
</comment>